<proteinExistence type="evidence at protein level"/>
<feature type="chain" id="PRO_0000116882" description="Coiled-coil quantitatively-enriched protein 1">
    <location>
        <begin position="1"/>
        <end position="735"/>
    </location>
</feature>
<feature type="coiled-coil region" evidence="1">
    <location>
        <begin position="514"/>
        <end position="719"/>
    </location>
</feature>
<feature type="strand" evidence="5">
    <location>
        <begin position="133"/>
        <end position="138"/>
    </location>
</feature>
<feature type="helix" evidence="5">
    <location>
        <begin position="142"/>
        <end position="154"/>
    </location>
</feature>
<feature type="helix" evidence="5">
    <location>
        <begin position="156"/>
        <end position="163"/>
    </location>
</feature>
<feature type="helix" evidence="5">
    <location>
        <begin position="169"/>
        <end position="187"/>
    </location>
</feature>
<feature type="helix" evidence="5">
    <location>
        <begin position="189"/>
        <end position="192"/>
    </location>
</feature>
<feature type="helix" evidence="5">
    <location>
        <begin position="219"/>
        <end position="221"/>
    </location>
</feature>
<feature type="helix" evidence="5">
    <location>
        <begin position="224"/>
        <end position="234"/>
    </location>
</feature>
<feature type="turn" evidence="5">
    <location>
        <begin position="235"/>
        <end position="239"/>
    </location>
</feature>
<feature type="strand" evidence="5">
    <location>
        <begin position="243"/>
        <end position="249"/>
    </location>
</feature>
<feature type="helix" evidence="5">
    <location>
        <begin position="251"/>
        <end position="263"/>
    </location>
</feature>
<feature type="strand" evidence="5">
    <location>
        <begin position="268"/>
        <end position="270"/>
    </location>
</feature>
<feature type="strand" evidence="5">
    <location>
        <begin position="283"/>
        <end position="288"/>
    </location>
</feature>
<feature type="helix" evidence="5">
    <location>
        <begin position="289"/>
        <end position="291"/>
    </location>
</feature>
<feature type="helix" evidence="5">
    <location>
        <begin position="292"/>
        <end position="295"/>
    </location>
</feature>
<feature type="helix" evidence="5">
    <location>
        <begin position="296"/>
        <end position="299"/>
    </location>
</feature>
<feature type="strand" evidence="5">
    <location>
        <begin position="305"/>
        <end position="312"/>
    </location>
</feature>
<feature type="helix" evidence="5">
    <location>
        <begin position="313"/>
        <end position="322"/>
    </location>
</feature>
<feature type="strand" evidence="5">
    <location>
        <begin position="330"/>
        <end position="335"/>
    </location>
</feature>
<feature type="helix" evidence="5">
    <location>
        <begin position="339"/>
        <end position="345"/>
    </location>
</feature>
<feature type="turn" evidence="5">
    <location>
        <begin position="346"/>
        <end position="349"/>
    </location>
</feature>
<feature type="helix" evidence="5">
    <location>
        <begin position="354"/>
        <end position="365"/>
    </location>
</feature>
<feature type="helix" evidence="5">
    <location>
        <begin position="397"/>
        <end position="416"/>
    </location>
</feature>
<feature type="helix" evidence="5">
    <location>
        <begin position="421"/>
        <end position="423"/>
    </location>
</feature>
<feature type="helix" evidence="5">
    <location>
        <begin position="433"/>
        <end position="435"/>
    </location>
</feature>
<keyword id="KW-0002">3D-structure</keyword>
<keyword id="KW-0158">Chromosome</keyword>
<keyword id="KW-0159">Chromosome partition</keyword>
<keyword id="KW-0175">Coiled coil</keyword>
<keyword id="KW-0903">Direct protein sequencing</keyword>
<keyword id="KW-0539">Nucleus</keyword>
<keyword id="KW-1185">Reference proteome</keyword>
<keyword id="KW-0779">Telomere</keyword>
<accession>Q10432</accession>
<dbReference type="EMBL" id="CU329672">
    <property type="protein sequence ID" value="CAB41227.1"/>
    <property type="molecule type" value="Genomic_DNA"/>
</dbReference>
<dbReference type="PIR" id="T41187">
    <property type="entry name" value="T41187"/>
</dbReference>
<dbReference type="RefSeq" id="NP_588210.1">
    <property type="nucleotide sequence ID" value="NM_001023200.2"/>
</dbReference>
<dbReference type="PDB" id="7CUJ">
    <property type="method" value="X-ray"/>
    <property type="resolution" value="2.40 A"/>
    <property type="chains" value="A/B=123-439"/>
</dbReference>
<dbReference type="PDBsum" id="7CUJ"/>
<dbReference type="SMR" id="Q10432"/>
<dbReference type="BioGRID" id="275918">
    <property type="interactions" value="74"/>
</dbReference>
<dbReference type="ComplexPortal" id="CPX-25757">
    <property type="entry name" value="Shelterin complex"/>
</dbReference>
<dbReference type="DIP" id="DIP-59444N"/>
<dbReference type="FunCoup" id="Q10432">
    <property type="interactions" value="3"/>
</dbReference>
<dbReference type="IntAct" id="Q10432">
    <property type="interactions" value="3"/>
</dbReference>
<dbReference type="STRING" id="284812.Q10432"/>
<dbReference type="iPTMnet" id="Q10432"/>
<dbReference type="PaxDb" id="4896-SPCC188.07.1"/>
<dbReference type="EnsemblFungi" id="SPCC188.07.1">
    <property type="protein sequence ID" value="SPCC188.07.1:pep"/>
    <property type="gene ID" value="SPCC188.07"/>
</dbReference>
<dbReference type="GeneID" id="2539352"/>
<dbReference type="KEGG" id="spo:2539352"/>
<dbReference type="PomBase" id="SPCC188.07">
    <property type="gene designation" value="ccq1"/>
</dbReference>
<dbReference type="VEuPathDB" id="FungiDB:SPCC188.07"/>
<dbReference type="HOGENOM" id="CLU_386440_0_0_1"/>
<dbReference type="InParanoid" id="Q10432"/>
<dbReference type="OMA" id="YFAFCID"/>
<dbReference type="CD-CODE" id="576F0A76">
    <property type="entry name" value="Centrosome"/>
</dbReference>
<dbReference type="PRO" id="PR:Q10432"/>
<dbReference type="Proteomes" id="UP000002485">
    <property type="component" value="Chromosome III"/>
</dbReference>
<dbReference type="GO" id="GO:0140445">
    <property type="term" value="C:chromosome, telomeric repeat region"/>
    <property type="evidence" value="ECO:0000314"/>
    <property type="project" value="PomBase"/>
</dbReference>
<dbReference type="GO" id="GO:0005654">
    <property type="term" value="C:nucleoplasm"/>
    <property type="evidence" value="ECO:0000314"/>
    <property type="project" value="PomBase"/>
</dbReference>
<dbReference type="GO" id="GO:0005634">
    <property type="term" value="C:nucleus"/>
    <property type="evidence" value="ECO:0007005"/>
    <property type="project" value="PomBase"/>
</dbReference>
<dbReference type="GO" id="GO:0070187">
    <property type="term" value="C:shelterin complex"/>
    <property type="evidence" value="ECO:0000314"/>
    <property type="project" value="PomBase"/>
</dbReference>
<dbReference type="GO" id="GO:0140720">
    <property type="term" value="C:subtelomeric heterochromatin"/>
    <property type="evidence" value="ECO:0000314"/>
    <property type="project" value="PomBase"/>
</dbReference>
<dbReference type="GO" id="GO:0000782">
    <property type="term" value="C:telomere cap complex"/>
    <property type="evidence" value="ECO:0000314"/>
    <property type="project" value="PomBase"/>
</dbReference>
<dbReference type="GO" id="GO:0060090">
    <property type="term" value="F:molecular adaptor activity"/>
    <property type="evidence" value="ECO:0000269"/>
    <property type="project" value="PomBase"/>
</dbReference>
<dbReference type="GO" id="GO:0045132">
    <property type="term" value="P:meiotic chromosome segregation"/>
    <property type="evidence" value="ECO:0000315"/>
    <property type="project" value="PomBase"/>
</dbReference>
<dbReference type="GO" id="GO:0045141">
    <property type="term" value="P:meiotic telomere clustering"/>
    <property type="evidence" value="ECO:0000315"/>
    <property type="project" value="PomBase"/>
</dbReference>
<dbReference type="GO" id="GO:0016233">
    <property type="term" value="P:telomere capping"/>
    <property type="evidence" value="ECO:0000316"/>
    <property type="project" value="PomBase"/>
</dbReference>
<dbReference type="GO" id="GO:0000723">
    <property type="term" value="P:telomere maintenance"/>
    <property type="evidence" value="ECO:0000315"/>
    <property type="project" value="PomBase"/>
</dbReference>
<dbReference type="GO" id="GO:0007004">
    <property type="term" value="P:telomere maintenance via telomerase"/>
    <property type="evidence" value="ECO:0000315"/>
    <property type="project" value="PomBase"/>
</dbReference>
<dbReference type="GO" id="GO:1905324">
    <property type="term" value="P:telomere-telomerase complex assembly"/>
    <property type="evidence" value="ECO:0000315"/>
    <property type="project" value="PomBase"/>
</dbReference>
<sequence length="735" mass="83301">MSEINDFTNSIIINESDTKYEVYSEVNSSNRWIAKEDCPSPLEDVWLLKLAGHKRKLEEPLSCMRNEEPASKQREIEKFLRTDLDHSENDFLTQEVDEFPSTQQLFPIPLQNDTAFDSSEESITKSSKSSFSVLDIGLPMSALQRKMMHRLVQYFAFCIDHFCTGPSDSRIQEKIRLFIQSAHNIAKHPSLYDTEVRNPSAAESTNSHVSLDASNFSSYAENSSKFLFLQELFKNLSPSYSKTFFLFISNQFLANTLTQWLKSQNIDAELWAEEDAKTSQHPAIWICVSKKAPSASHFLQSCPDLSATIFYDIEAYMSVTSSLPSIQSLVLRLIHLGSIEHAIKCFQSSYNASFLVNIVGVVATLSSSSEENSEASNLSTLFEKSGNFEEILGSESHSSITEKTRDIAKNVATWLKNGENFSSWPLPPLMDLASLSVAEPRDSQPSVSQVNDTFVKSSDSTFPSSQSMQSPSKLHSLTSNATDLLSSSSLKKNFFSQQEADEVELSNNYDLQGAAVQYLQRRLRMVEDELHEAINSKNVQQSRSEELEQQISKLTDNLQEYRNTVRELKLDLEKSKKKNEDLSKLEVEKVEEIANLKKELTHLAKQQEFGFKYVQEFSNEDLQGKLIEANEKNYKLTQLLKTQKEDADFITNQYQNASTFAAEQSKEVAKLQAECKRLQAINSKVMEEVKVYNDSRVEALLAKVSSLEETLKILEQKSLPKFTPHNQSPRIIDSN</sequence>
<organism>
    <name type="scientific">Schizosaccharomyces pombe (strain 972 / ATCC 24843)</name>
    <name type="common">Fission yeast</name>
    <dbReference type="NCBI Taxonomy" id="284812"/>
    <lineage>
        <taxon>Eukaryota</taxon>
        <taxon>Fungi</taxon>
        <taxon>Dikarya</taxon>
        <taxon>Ascomycota</taxon>
        <taxon>Taphrinomycotina</taxon>
        <taxon>Schizosaccharomycetes</taxon>
        <taxon>Schizosaccharomycetales</taxon>
        <taxon>Schizosaccharomycetaceae</taxon>
        <taxon>Schizosaccharomyces</taxon>
    </lineage>
</organism>
<reference key="1">
    <citation type="journal article" date="2002" name="Nature">
        <title>The genome sequence of Schizosaccharomyces pombe.</title>
        <authorList>
            <person name="Wood V."/>
            <person name="Gwilliam R."/>
            <person name="Rajandream M.A."/>
            <person name="Lyne M.H."/>
            <person name="Lyne R."/>
            <person name="Stewart A."/>
            <person name="Sgouros J.G."/>
            <person name="Peat N."/>
            <person name="Hayles J."/>
            <person name="Baker S.G."/>
            <person name="Basham D."/>
            <person name="Bowman S."/>
            <person name="Brooks K."/>
            <person name="Brown D."/>
            <person name="Brown S."/>
            <person name="Chillingworth T."/>
            <person name="Churcher C.M."/>
            <person name="Collins M."/>
            <person name="Connor R."/>
            <person name="Cronin A."/>
            <person name="Davis P."/>
            <person name="Feltwell T."/>
            <person name="Fraser A."/>
            <person name="Gentles S."/>
            <person name="Goble A."/>
            <person name="Hamlin N."/>
            <person name="Harris D.E."/>
            <person name="Hidalgo J."/>
            <person name="Hodgson G."/>
            <person name="Holroyd S."/>
            <person name="Hornsby T."/>
            <person name="Howarth S."/>
            <person name="Huckle E.J."/>
            <person name="Hunt S."/>
            <person name="Jagels K."/>
            <person name="James K.D."/>
            <person name="Jones L."/>
            <person name="Jones M."/>
            <person name="Leather S."/>
            <person name="McDonald S."/>
            <person name="McLean J."/>
            <person name="Mooney P."/>
            <person name="Moule S."/>
            <person name="Mungall K.L."/>
            <person name="Murphy L.D."/>
            <person name="Niblett D."/>
            <person name="Odell C."/>
            <person name="Oliver K."/>
            <person name="O'Neil S."/>
            <person name="Pearson D."/>
            <person name="Quail M.A."/>
            <person name="Rabbinowitsch E."/>
            <person name="Rutherford K.M."/>
            <person name="Rutter S."/>
            <person name="Saunders D."/>
            <person name="Seeger K."/>
            <person name="Sharp S."/>
            <person name="Skelton J."/>
            <person name="Simmonds M.N."/>
            <person name="Squares R."/>
            <person name="Squares S."/>
            <person name="Stevens K."/>
            <person name="Taylor K."/>
            <person name="Taylor R.G."/>
            <person name="Tivey A."/>
            <person name="Walsh S.V."/>
            <person name="Warren T."/>
            <person name="Whitehead S."/>
            <person name="Woodward J.R."/>
            <person name="Volckaert G."/>
            <person name="Aert R."/>
            <person name="Robben J."/>
            <person name="Grymonprez B."/>
            <person name="Weltjens I."/>
            <person name="Vanstreels E."/>
            <person name="Rieger M."/>
            <person name="Schaefer M."/>
            <person name="Mueller-Auer S."/>
            <person name="Gabel C."/>
            <person name="Fuchs M."/>
            <person name="Duesterhoeft A."/>
            <person name="Fritzc C."/>
            <person name="Holzer E."/>
            <person name="Moestl D."/>
            <person name="Hilbert H."/>
            <person name="Borzym K."/>
            <person name="Langer I."/>
            <person name="Beck A."/>
            <person name="Lehrach H."/>
            <person name="Reinhardt R."/>
            <person name="Pohl T.M."/>
            <person name="Eger P."/>
            <person name="Zimmermann W."/>
            <person name="Wedler H."/>
            <person name="Wambutt R."/>
            <person name="Purnelle B."/>
            <person name="Goffeau A."/>
            <person name="Cadieu E."/>
            <person name="Dreano S."/>
            <person name="Gloux S."/>
            <person name="Lelaure V."/>
            <person name="Mottier S."/>
            <person name="Galibert F."/>
            <person name="Aves S.J."/>
            <person name="Xiang Z."/>
            <person name="Hunt C."/>
            <person name="Moore K."/>
            <person name="Hurst S.M."/>
            <person name="Lucas M."/>
            <person name="Rochet M."/>
            <person name="Gaillardin C."/>
            <person name="Tallada V.A."/>
            <person name="Garzon A."/>
            <person name="Thode G."/>
            <person name="Daga R.R."/>
            <person name="Cruzado L."/>
            <person name="Jimenez J."/>
            <person name="Sanchez M."/>
            <person name="del Rey F."/>
            <person name="Benito J."/>
            <person name="Dominguez A."/>
            <person name="Revuelta J.L."/>
            <person name="Moreno S."/>
            <person name="Armstrong J."/>
            <person name="Forsburg S.L."/>
            <person name="Cerutti L."/>
            <person name="Lowe T."/>
            <person name="McCombie W.R."/>
            <person name="Paulsen I."/>
            <person name="Potashkin J."/>
            <person name="Shpakovski G.V."/>
            <person name="Ussery D."/>
            <person name="Barrell B.G."/>
            <person name="Nurse P."/>
        </authorList>
    </citation>
    <scope>NUCLEOTIDE SEQUENCE [LARGE SCALE GENOMIC DNA]</scope>
    <source>
        <strain>972 / ATCC 24843</strain>
    </source>
</reference>
<reference key="2">
    <citation type="journal article" date="2004" name="Mol. Cell">
        <title>An SMC-domain protein in fission yeast links telomeres to the meiotic centrosome.</title>
        <authorList>
            <person name="Flory M.R."/>
            <person name="Carson A.R."/>
            <person name="Muller E.G."/>
            <person name="Aebersold R."/>
        </authorList>
    </citation>
    <scope>PROTEIN SEQUENCE OF 57-79</scope>
    <scope>FUNCTION</scope>
    <scope>INTERACTION WITH PCP1 AND TAZ1</scope>
    <scope>SUBCELLULAR LOCATION</scope>
</reference>
<reference key="3">
    <citation type="journal article" date="2006" name="Nat. Biotechnol.">
        <title>ORFeome cloning and global analysis of protein localization in the fission yeast Schizosaccharomyces pombe.</title>
        <authorList>
            <person name="Matsuyama A."/>
            <person name="Arai R."/>
            <person name="Yashiroda Y."/>
            <person name="Shirai A."/>
            <person name="Kamata A."/>
            <person name="Sekido S."/>
            <person name="Kobayashi Y."/>
            <person name="Hashimoto A."/>
            <person name="Hamamoto M."/>
            <person name="Hiraoka Y."/>
            <person name="Horinouchi S."/>
            <person name="Yoshida M."/>
        </authorList>
    </citation>
    <scope>SUBCELLULAR LOCATION [LARGE SCALE ANALYSIS]</scope>
</reference>
<reference key="4">
    <citation type="journal article" date="2007" name="Cell">
        <title>SHREC, an effector complex for heterochromatic transcriptional silencing.</title>
        <authorList>
            <person name="Sugiyama T."/>
            <person name="Cam H.P."/>
            <person name="Sugiyama R."/>
            <person name="Noma K."/>
            <person name="Zofall M."/>
            <person name="Kobayashi R."/>
            <person name="Grewal S.I.S."/>
        </authorList>
    </citation>
    <scope>FUNCTION</scope>
    <scope>INTERACTION WITH CLR3</scope>
    <scope>SUBCELLULAR LOCATION</scope>
</reference>
<reference key="5">
    <citation type="journal article" date="2008" name="Science">
        <title>Fission yeast Pot1-Tpp1 protects telomeres and regulates telomere length.</title>
        <authorList>
            <person name="Miyoshi T."/>
            <person name="Kanoh J."/>
            <person name="Saito M."/>
            <person name="Ishikawa F."/>
        </authorList>
    </citation>
    <scope>FUNCTION</scope>
    <scope>SUBCELLULAR LOCATION</scope>
    <scope>INTERACTION WITH POT1 AND TPZ1</scope>
</reference>
<gene>
    <name type="primary">ccq1</name>
    <name type="ORF">SPCC188.07</name>
</gene>
<evidence type="ECO:0000255" key="1"/>
<evidence type="ECO:0000269" key="2">
    <source>
    </source>
</evidence>
<evidence type="ECO:0000269" key="3">
    <source>
    </source>
</evidence>
<evidence type="ECO:0000269" key="4">
    <source>
    </source>
</evidence>
<evidence type="ECO:0007829" key="5">
    <source>
        <dbReference type="PDB" id="7CUJ"/>
    </source>
</evidence>
<protein>
    <recommendedName>
        <fullName>Coiled-coil quantitatively-enriched protein 1</fullName>
    </recommendedName>
    <alternativeName>
        <fullName>Structural maintenance of chromosomes protein ccq1</fullName>
        <shortName>SMC protein ccq1</shortName>
    </alternativeName>
</protein>
<name>CCQ1_SCHPO</name>
<comment type="function">
    <text evidence="2 3 4">Component of the meiotic bouquet that facilitates meiotic nuclear reorganization of the telomeres to the centrosome. Links telomeres to the meiotic centrosome component pcp1. Essential for the formation of normal telomere clusters during meiotic prophase. Required for telomere length regulation and chromosome segregation. Required for proper positioning of nucleosomes at heterochromatic loci and for transcriptional gene silencing (TGS) function of the Snf2/Hdac-containing repressor complex (SHREC).</text>
</comment>
<comment type="subunit">
    <text evidence="2 3 4">Interacts (during meiosis) with pcp1. Interacts with clr3, pot1, taz1 and tpz1.</text>
</comment>
<comment type="interaction">
    <interactant intactId="EBI-15953947">
        <id>Q10432</id>
    </interactant>
    <interactant intactId="EBI-1556899">
        <id>O74804</id>
        <label>est1</label>
    </interactant>
    <organismsDiffer>false</organismsDiffer>
    <experiments>4</experiments>
</comment>
<comment type="interaction">
    <interactant intactId="EBI-15953947">
        <id>Q10432</id>
    </interactant>
    <interactant intactId="EBI-8802014">
        <id>O14246</id>
        <label>tpz1</label>
    </interactant>
    <organismsDiffer>false</organismsDiffer>
    <experiments>2</experiments>
</comment>
<comment type="subcellular location">
    <subcellularLocation>
        <location>Nucleus</location>
        <location>Nucleoplasm</location>
    </subcellularLocation>
    <subcellularLocation>
        <location>Chromosome</location>
        <location>Telomere</location>
    </subcellularLocation>
    <text>Associates with major heterochromatin, sub-telomeres, rDNA and the mat locus.</text>
</comment>